<feature type="chain" id="PRO_0000203972" description="Sulfofructosephosphate aldolase">
    <location>
        <begin position="1"/>
        <end position="292"/>
    </location>
</feature>
<feature type="active site" description="Schiff-base intermediate with substrate" evidence="1 2 7">
    <location>
        <position position="193"/>
    </location>
</feature>
<feature type="sequence conflict" description="In Ref. 1; AAF27922." evidence="4" ref="1">
    <original>P</original>
    <variation>L</variation>
    <location>
        <position position="235"/>
    </location>
</feature>
<feature type="helix" evidence="9">
    <location>
        <begin position="6"/>
        <end position="9"/>
    </location>
</feature>
<feature type="strand" evidence="9">
    <location>
        <begin position="16"/>
        <end position="20"/>
    </location>
</feature>
<feature type="helix" evidence="9">
    <location>
        <begin position="25"/>
        <end position="33"/>
    </location>
</feature>
<feature type="helix" evidence="9">
    <location>
        <begin position="42"/>
        <end position="56"/>
    </location>
</feature>
<feature type="helix" evidence="9">
    <location>
        <begin position="57"/>
        <end position="59"/>
    </location>
</feature>
<feature type="strand" evidence="9">
    <location>
        <begin position="61"/>
        <end position="65"/>
    </location>
</feature>
<feature type="turn" evidence="9">
    <location>
        <begin position="67"/>
        <end position="70"/>
    </location>
</feature>
<feature type="helix" evidence="9">
    <location>
        <begin position="71"/>
        <end position="76"/>
    </location>
</feature>
<feature type="strand" evidence="9">
    <location>
        <begin position="84"/>
        <end position="89"/>
    </location>
</feature>
<feature type="strand" evidence="9">
    <location>
        <begin position="91"/>
        <end position="96"/>
    </location>
</feature>
<feature type="strand" evidence="9">
    <location>
        <begin position="99"/>
        <end position="106"/>
    </location>
</feature>
<feature type="helix" evidence="9">
    <location>
        <begin position="112"/>
        <end position="117"/>
    </location>
</feature>
<feature type="strand" evidence="9">
    <location>
        <begin position="122"/>
        <end position="129"/>
    </location>
</feature>
<feature type="helix" evidence="9">
    <location>
        <begin position="135"/>
        <end position="150"/>
    </location>
</feature>
<feature type="turn" evidence="9">
    <location>
        <begin position="151"/>
        <end position="153"/>
    </location>
</feature>
<feature type="strand" evidence="9">
    <location>
        <begin position="155"/>
        <end position="162"/>
    </location>
</feature>
<feature type="strand" evidence="8">
    <location>
        <begin position="166"/>
        <end position="169"/>
    </location>
</feature>
<feature type="helix" evidence="9">
    <location>
        <begin position="173"/>
        <end position="184"/>
    </location>
</feature>
<feature type="strand" evidence="9">
    <location>
        <begin position="190"/>
        <end position="195"/>
    </location>
</feature>
<feature type="helix" evidence="9">
    <location>
        <begin position="197"/>
        <end position="200"/>
    </location>
</feature>
<feature type="helix" evidence="9">
    <location>
        <begin position="204"/>
        <end position="215"/>
    </location>
</feature>
<feature type="strand" evidence="9">
    <location>
        <begin position="222"/>
        <end position="225"/>
    </location>
</feature>
<feature type="turn" evidence="9">
    <location>
        <begin position="231"/>
        <end position="233"/>
    </location>
</feature>
<feature type="helix" evidence="9">
    <location>
        <begin position="234"/>
        <end position="243"/>
    </location>
</feature>
<feature type="strand" evidence="9">
    <location>
        <begin position="248"/>
        <end position="252"/>
    </location>
</feature>
<feature type="helix" evidence="9">
    <location>
        <begin position="253"/>
        <end position="256"/>
    </location>
</feature>
<feature type="helix" evidence="9">
    <location>
        <begin position="257"/>
        <end position="259"/>
    </location>
</feature>
<feature type="helix" evidence="9">
    <location>
        <begin position="265"/>
        <end position="271"/>
    </location>
</feature>
<feature type="helix" evidence="9">
    <location>
        <begin position="273"/>
        <end position="289"/>
    </location>
</feature>
<protein>
    <recommendedName>
        <fullName evidence="1 4">Sulfofructosephosphate aldolase</fullName>
        <shortName evidence="1 3">SFP aldolase</shortName>
        <ecNumber evidence="1 2">4.1.2.57</ecNumber>
    </recommendedName>
</protein>
<name>SQUT_SALTY</name>
<dbReference type="EC" id="4.1.2.57" evidence="1 2"/>
<dbReference type="EMBL" id="AF220438">
    <property type="protein sequence ID" value="AAF27922.1"/>
    <property type="molecule type" value="Genomic_DNA"/>
</dbReference>
<dbReference type="EMBL" id="AE006468">
    <property type="protein sequence ID" value="AAL22861.1"/>
    <property type="molecule type" value="Genomic_DNA"/>
</dbReference>
<dbReference type="RefSeq" id="NP_462902.1">
    <property type="nucleotide sequence ID" value="NC_003197.2"/>
</dbReference>
<dbReference type="RefSeq" id="WP_001067421.1">
    <property type="nucleotide sequence ID" value="NC_003197.2"/>
</dbReference>
<dbReference type="PDB" id="1TO3">
    <property type="method" value="X-ray"/>
    <property type="resolution" value="2.70 A"/>
    <property type="chains" value="A=2-292"/>
</dbReference>
<dbReference type="PDB" id="7AG7">
    <property type="method" value="X-ray"/>
    <property type="resolution" value="1.80 A"/>
    <property type="chains" value="A/B/C/D/E/F/G/H/I/J/K/L=1-292"/>
</dbReference>
<dbReference type="PDB" id="7NE2">
    <property type="method" value="X-ray"/>
    <property type="resolution" value="1.50 A"/>
    <property type="chains" value="A/B/C/D=1-292"/>
</dbReference>
<dbReference type="PDBsum" id="1TO3"/>
<dbReference type="PDBsum" id="7AG7"/>
<dbReference type="PDBsum" id="7NE2"/>
<dbReference type="SMR" id="Q9L7R9"/>
<dbReference type="STRING" id="99287.STM4022"/>
<dbReference type="PaxDb" id="99287-STM4022"/>
<dbReference type="DNASU" id="1255548"/>
<dbReference type="GeneID" id="1255548"/>
<dbReference type="KEGG" id="stm:STM4022"/>
<dbReference type="PATRIC" id="fig|99287.12.peg.4237"/>
<dbReference type="HOGENOM" id="CLU_083300_0_0_6"/>
<dbReference type="OMA" id="CIKILLY"/>
<dbReference type="PhylomeDB" id="Q9L7R9"/>
<dbReference type="BioCyc" id="SENT99287:STM4022-MONOMER"/>
<dbReference type="EvolutionaryTrace" id="Q9L7R9"/>
<dbReference type="Proteomes" id="UP000001014">
    <property type="component" value="Chromosome"/>
</dbReference>
<dbReference type="GO" id="GO:0061595">
    <property type="term" value="F:6-deoxy-6-sulfofructose-1-phosphate aldolase activity"/>
    <property type="evidence" value="ECO:0000318"/>
    <property type="project" value="GO_Central"/>
</dbReference>
<dbReference type="GO" id="GO:1902777">
    <property type="term" value="P:6-sulfoquinovose(1-) catabolic process"/>
    <property type="evidence" value="ECO:0000318"/>
    <property type="project" value="GO_Central"/>
</dbReference>
<dbReference type="CDD" id="cd00945">
    <property type="entry name" value="Aldolase_Class_I"/>
    <property type="match status" value="1"/>
</dbReference>
<dbReference type="FunFam" id="3.20.20.70:FF:000089">
    <property type="entry name" value="Sulfofructosephosphate aldolase"/>
    <property type="match status" value="1"/>
</dbReference>
<dbReference type="Gene3D" id="3.20.20.70">
    <property type="entry name" value="Aldolase class I"/>
    <property type="match status" value="1"/>
</dbReference>
<dbReference type="HAMAP" id="MF_01912">
    <property type="entry name" value="SFP_aldolase"/>
    <property type="match status" value="1"/>
</dbReference>
<dbReference type="InterPro" id="IPR013785">
    <property type="entry name" value="Aldolase_TIM"/>
</dbReference>
<dbReference type="InterPro" id="IPR002915">
    <property type="entry name" value="DeoC/FbaB/LacD_aldolase"/>
</dbReference>
<dbReference type="InterPro" id="IPR050552">
    <property type="entry name" value="LacD_aldolase"/>
</dbReference>
<dbReference type="InterPro" id="IPR017291">
    <property type="entry name" value="SFP_aldolase_YihT"/>
</dbReference>
<dbReference type="PANTHER" id="PTHR39340">
    <property type="entry name" value="SULFOFRUCTOSEPHOSPHATE ALDOLASE"/>
    <property type="match status" value="1"/>
</dbReference>
<dbReference type="PANTHER" id="PTHR39340:SF1">
    <property type="entry name" value="SULFOFRUCTOSEPHOSPHATE ALDOLASE"/>
    <property type="match status" value="1"/>
</dbReference>
<dbReference type="Pfam" id="PF01791">
    <property type="entry name" value="DeoC"/>
    <property type="match status" value="1"/>
</dbReference>
<dbReference type="PIRSF" id="PIRSF037840">
    <property type="entry name" value="Aldolase_YihT"/>
    <property type="match status" value="1"/>
</dbReference>
<dbReference type="SMART" id="SM01133">
    <property type="entry name" value="DeoC"/>
    <property type="match status" value="1"/>
</dbReference>
<dbReference type="SUPFAM" id="SSF51569">
    <property type="entry name" value="Aldolase"/>
    <property type="match status" value="1"/>
</dbReference>
<comment type="function">
    <text evidence="2">Cleaves 6-deoxy-6-sulfo-D-fructose 1-phosphate (SFP) to form dihydroxyacetone phosphate (DHAP) and 3-sulfolactaldehyde (SLA) (PubMed:33791429). Can also catalyze the reverse reaction (PubMed:33791429).</text>
</comment>
<comment type="catalytic activity">
    <reaction evidence="1 2">
        <text>6-deoxy-6-sulfo-D-fructose 1-phosphate = (2S)-3-sulfolactaldehyde + dihydroxyacetone phosphate</text>
        <dbReference type="Rhea" id="RHEA:40515"/>
        <dbReference type="ChEBI" id="CHEBI:57642"/>
        <dbReference type="ChEBI" id="CHEBI:77134"/>
        <dbReference type="ChEBI" id="CHEBI:90109"/>
        <dbReference type="EC" id="4.1.2.57"/>
    </reaction>
    <physiologicalReaction direction="left-to-right" evidence="1 2">
        <dbReference type="Rhea" id="RHEA:40516"/>
    </physiologicalReaction>
</comment>
<comment type="biophysicochemical properties">
    <kinetics>
        <KM evidence="2">3.57 mM for 6-deoxy-6-sulfo-D-fructose 1-phosphate</KM>
        <text evidence="2">kcat is 47.7 sec(-1) with 6-deoxy-6-sulfo-D-fructose 1-phosphate as substrate.</text>
    </kinetics>
</comment>
<comment type="subunit">
    <text evidence="2">Homotetramer.</text>
</comment>
<comment type="similarity">
    <text evidence="1 4">Belongs to the aldolase LacD family.</text>
</comment>
<proteinExistence type="evidence at protein level"/>
<keyword id="KW-0002">3D-structure</keyword>
<keyword id="KW-0119">Carbohydrate metabolism</keyword>
<keyword id="KW-0456">Lyase</keyword>
<keyword id="KW-1185">Reference proteome</keyword>
<keyword id="KW-0704">Schiff base</keyword>
<reference key="1">
    <citation type="submission" date="2000-01" db="EMBL/GenBank/DDBJ databases">
        <title>Utilization of dihydroorotate as sole pyrimidine source by Salmonella typhimurium.</title>
        <authorList>
            <person name="Krogan N.J."/>
            <person name="Zhang R."/>
            <person name="Neuhard J."/>
            <person name="Kelln R.A."/>
        </authorList>
    </citation>
    <scope>NUCLEOTIDE SEQUENCE [GENOMIC DNA]</scope>
    <source>
        <strain>LT2</strain>
    </source>
</reference>
<reference key="2">
    <citation type="journal article" date="2001" name="Nature">
        <title>Complete genome sequence of Salmonella enterica serovar Typhimurium LT2.</title>
        <authorList>
            <person name="McClelland M."/>
            <person name="Sanderson K.E."/>
            <person name="Spieth J."/>
            <person name="Clifton S.W."/>
            <person name="Latreille P."/>
            <person name="Courtney L."/>
            <person name="Porwollik S."/>
            <person name="Ali J."/>
            <person name="Dante M."/>
            <person name="Du F."/>
            <person name="Hou S."/>
            <person name="Layman D."/>
            <person name="Leonard S."/>
            <person name="Nguyen C."/>
            <person name="Scott K."/>
            <person name="Holmes A."/>
            <person name="Grewal N."/>
            <person name="Mulvaney E."/>
            <person name="Ryan E."/>
            <person name="Sun H."/>
            <person name="Florea L."/>
            <person name="Miller W."/>
            <person name="Stoneking T."/>
            <person name="Nhan M."/>
            <person name="Waterston R."/>
            <person name="Wilson R.K."/>
        </authorList>
    </citation>
    <scope>NUCLEOTIDE SEQUENCE [LARGE SCALE GENOMIC DNA]</scope>
    <source>
        <strain>LT2 / SGSC1412 / ATCC 700720</strain>
    </source>
</reference>
<reference evidence="5" key="3">
    <citation type="submission" date="2004-06" db="PDB data bank">
        <title>Structure of yiht from Salmonella typhimurium.</title>
        <authorList>
            <person name="Gorman J."/>
            <person name="Shapiro L."/>
        </authorList>
    </citation>
    <scope>X-RAY CRYSTALLOGRAPHY (2.70 ANGSTROMS) OF 2-292</scope>
</reference>
<reference evidence="6 7" key="4">
    <citation type="journal article" date="2021" name="ACS Cent. Sci.">
        <title>Molecular Basis of Sulfosugar Selectivity in Sulfoglycolysis.</title>
        <authorList>
            <person name="Sharma M."/>
            <person name="Abayakoon P."/>
            <person name="Epa R."/>
            <person name="Jin Y."/>
            <person name="Lingford J.P."/>
            <person name="Shimada T."/>
            <person name="Nakano M."/>
            <person name="Mui J.W."/>
            <person name="Ishihama A."/>
            <person name="Goddard-Borger E.D."/>
            <person name="Davies G.J."/>
            <person name="Williams S.J."/>
        </authorList>
    </citation>
    <scope>X-RAY CRYSTALLOGRAPHY (1.50 ANGSTROMS) IN COMPLEX WITH 6-DEOXY-6-SULFO-D-FRUCTOSE 1-PHOSPHATE AND DHAP</scope>
    <scope>FUNCTION</scope>
    <scope>CATALYTIC ACTIVITY</scope>
    <scope>BIOPHYSICOCHEMICAL PROPERTIES</scope>
    <scope>SUBUNIT</scope>
    <scope>ACTIVE SITE</scope>
</reference>
<organism>
    <name type="scientific">Salmonella typhimurium (strain LT2 / SGSC1412 / ATCC 700720)</name>
    <dbReference type="NCBI Taxonomy" id="99287"/>
    <lineage>
        <taxon>Bacteria</taxon>
        <taxon>Pseudomonadati</taxon>
        <taxon>Pseudomonadota</taxon>
        <taxon>Gammaproteobacteria</taxon>
        <taxon>Enterobacterales</taxon>
        <taxon>Enterobacteriaceae</taxon>
        <taxon>Salmonella</taxon>
    </lineage>
</organism>
<evidence type="ECO:0000255" key="1">
    <source>
        <dbReference type="HAMAP-Rule" id="MF_01912"/>
    </source>
</evidence>
<evidence type="ECO:0000269" key="2">
    <source>
    </source>
</evidence>
<evidence type="ECO:0000303" key="3">
    <source>
    </source>
</evidence>
<evidence type="ECO:0000305" key="4"/>
<evidence type="ECO:0007744" key="5">
    <source>
        <dbReference type="PDB" id="1TO3"/>
    </source>
</evidence>
<evidence type="ECO:0007744" key="6">
    <source>
        <dbReference type="PDB" id="7AG7"/>
    </source>
</evidence>
<evidence type="ECO:0007744" key="7">
    <source>
        <dbReference type="PDB" id="7NE2"/>
    </source>
</evidence>
<evidence type="ECO:0007829" key="8">
    <source>
        <dbReference type="PDB" id="7AG7"/>
    </source>
</evidence>
<evidence type="ECO:0007829" key="9">
    <source>
        <dbReference type="PDB" id="7NE2"/>
    </source>
</evidence>
<sequence>MNNYTIKDITRASGGFAMLAVDQREAMRLMFAAAGAKTPVADSVLTDFKVNAAKILSPYASAVLLDQQFCYRQAVEQNAVAKSCAMIVAADDFIPGNGIPVDNVVLDKKINAQAVKRDGAKALKLLVLWRSDEDAQQRLNMVKEFNELCHSNGLLSIIEPVVRPPRCGDKFDREQAIIDAAKELGDSGADLYKVEMPLYGKGARSDLLTASQRLNGHINMPWVILSSGVDEKLFPRAVRVAMEAGASGFLAGRAVWSSVIGLPDTELMLRDVSAPKLQRLGEIVDEMMAKRR</sequence>
<accession>Q9L7R9</accession>
<gene>
    <name type="primary">yihT</name>
    <name type="ordered locus">STM4022</name>
</gene>